<organism>
    <name type="scientific">Methylorubrum extorquens (strain CM4 / NCIMB 13688)</name>
    <name type="common">Methylobacterium extorquens</name>
    <dbReference type="NCBI Taxonomy" id="440085"/>
    <lineage>
        <taxon>Bacteria</taxon>
        <taxon>Pseudomonadati</taxon>
        <taxon>Pseudomonadota</taxon>
        <taxon>Alphaproteobacteria</taxon>
        <taxon>Hyphomicrobiales</taxon>
        <taxon>Methylobacteriaceae</taxon>
        <taxon>Methylorubrum</taxon>
    </lineage>
</organism>
<evidence type="ECO:0000255" key="1">
    <source>
        <dbReference type="HAMAP-Rule" id="MF_01368"/>
    </source>
</evidence>
<evidence type="ECO:0000305" key="2"/>
<protein>
    <recommendedName>
        <fullName evidence="1">Large ribosomal subunit protein bL17</fullName>
    </recommendedName>
    <alternativeName>
        <fullName evidence="2">50S ribosomal protein L17</fullName>
    </alternativeName>
</protein>
<keyword id="KW-0687">Ribonucleoprotein</keyword>
<keyword id="KW-0689">Ribosomal protein</keyword>
<comment type="subunit">
    <text evidence="1">Part of the 50S ribosomal subunit. Contacts protein L32.</text>
</comment>
<comment type="similarity">
    <text evidence="1">Belongs to the bacterial ribosomal protein bL17 family.</text>
</comment>
<proteinExistence type="inferred from homology"/>
<sequence>MRHGYRGRRFNRTTEHRKAMFANMSAALIKHEQIVTTLPKAKDLRPVVEKLISLGRTDSIHARRLAMAQIRDADMVKKLFSVLGPRYQSRPGGYCRIMKAGFRYGDNAPMAVIEFVDRDVDARGKDSGPTSVETAEAA</sequence>
<dbReference type="EMBL" id="CP001298">
    <property type="protein sequence ID" value="ACK83295.1"/>
    <property type="molecule type" value="Genomic_DNA"/>
</dbReference>
<dbReference type="RefSeq" id="WP_015950882.1">
    <property type="nucleotide sequence ID" value="NC_011757.1"/>
</dbReference>
<dbReference type="SMR" id="B7L0S4"/>
<dbReference type="KEGG" id="mch:Mchl_2453"/>
<dbReference type="HOGENOM" id="CLU_074407_2_0_5"/>
<dbReference type="Proteomes" id="UP000002385">
    <property type="component" value="Chromosome"/>
</dbReference>
<dbReference type="GO" id="GO:0022625">
    <property type="term" value="C:cytosolic large ribosomal subunit"/>
    <property type="evidence" value="ECO:0007669"/>
    <property type="project" value="TreeGrafter"/>
</dbReference>
<dbReference type="GO" id="GO:0003735">
    <property type="term" value="F:structural constituent of ribosome"/>
    <property type="evidence" value="ECO:0007669"/>
    <property type="project" value="InterPro"/>
</dbReference>
<dbReference type="GO" id="GO:0006412">
    <property type="term" value="P:translation"/>
    <property type="evidence" value="ECO:0007669"/>
    <property type="project" value="UniProtKB-UniRule"/>
</dbReference>
<dbReference type="FunFam" id="3.90.1030.10:FF:000001">
    <property type="entry name" value="50S ribosomal protein L17"/>
    <property type="match status" value="1"/>
</dbReference>
<dbReference type="Gene3D" id="3.90.1030.10">
    <property type="entry name" value="Ribosomal protein L17"/>
    <property type="match status" value="1"/>
</dbReference>
<dbReference type="HAMAP" id="MF_01368">
    <property type="entry name" value="Ribosomal_bL17"/>
    <property type="match status" value="1"/>
</dbReference>
<dbReference type="InterPro" id="IPR000456">
    <property type="entry name" value="Ribosomal_bL17"/>
</dbReference>
<dbReference type="InterPro" id="IPR036373">
    <property type="entry name" value="Ribosomal_bL17_sf"/>
</dbReference>
<dbReference type="NCBIfam" id="TIGR00059">
    <property type="entry name" value="L17"/>
    <property type="match status" value="1"/>
</dbReference>
<dbReference type="PANTHER" id="PTHR14413:SF16">
    <property type="entry name" value="LARGE RIBOSOMAL SUBUNIT PROTEIN BL17M"/>
    <property type="match status" value="1"/>
</dbReference>
<dbReference type="PANTHER" id="PTHR14413">
    <property type="entry name" value="RIBOSOMAL PROTEIN L17"/>
    <property type="match status" value="1"/>
</dbReference>
<dbReference type="Pfam" id="PF01196">
    <property type="entry name" value="Ribosomal_L17"/>
    <property type="match status" value="1"/>
</dbReference>
<dbReference type="SUPFAM" id="SSF64263">
    <property type="entry name" value="Prokaryotic ribosomal protein L17"/>
    <property type="match status" value="1"/>
</dbReference>
<feature type="chain" id="PRO_1000184030" description="Large ribosomal subunit protein bL17">
    <location>
        <begin position="1"/>
        <end position="138"/>
    </location>
</feature>
<gene>
    <name evidence="1" type="primary">rplQ</name>
    <name type="ordered locus">Mchl_2453</name>
</gene>
<accession>B7L0S4</accession>
<reference key="1">
    <citation type="submission" date="2008-12" db="EMBL/GenBank/DDBJ databases">
        <title>Complete sequence of chromosome of Methylobacterium chloromethanicum CM4.</title>
        <authorList>
            <consortium name="US DOE Joint Genome Institute"/>
            <person name="Lucas S."/>
            <person name="Copeland A."/>
            <person name="Lapidus A."/>
            <person name="Glavina del Rio T."/>
            <person name="Dalin E."/>
            <person name="Tice H."/>
            <person name="Bruce D."/>
            <person name="Goodwin L."/>
            <person name="Pitluck S."/>
            <person name="Chertkov O."/>
            <person name="Brettin T."/>
            <person name="Detter J.C."/>
            <person name="Han C."/>
            <person name="Larimer F."/>
            <person name="Land M."/>
            <person name="Hauser L."/>
            <person name="Kyrpides N."/>
            <person name="Mikhailova N."/>
            <person name="Marx C."/>
            <person name="Richardson P."/>
        </authorList>
    </citation>
    <scope>NUCLEOTIDE SEQUENCE [LARGE SCALE GENOMIC DNA]</scope>
    <source>
        <strain>CM4 / NCIMB 13688</strain>
    </source>
</reference>
<name>RL17_METC4</name>